<accession>P01651</accession>
<feature type="chain" id="PRO_0000059806" description="Ig kappa chain V-V region EPC 109">
    <location>
        <begin position="1"/>
        <end position="108" status="greater than"/>
    </location>
</feature>
<feature type="region of interest" description="Framework-1">
    <location>
        <begin position="1"/>
        <end position="23"/>
    </location>
</feature>
<feature type="region of interest" description="Complementarity-determining-1">
    <location>
        <begin position="24"/>
        <end position="34"/>
    </location>
</feature>
<feature type="region of interest" description="Framework-2">
    <location>
        <begin position="35"/>
        <end position="49"/>
    </location>
</feature>
<feature type="region of interest" description="Complementarity-determining-2">
    <location>
        <begin position="50"/>
        <end position="56"/>
    </location>
</feature>
<feature type="region of interest" description="Framework-3">
    <location>
        <begin position="57"/>
        <end position="88"/>
    </location>
</feature>
<feature type="region of interest" description="Complementarity-determining-3">
    <location>
        <begin position="89"/>
        <end position="97"/>
    </location>
</feature>
<feature type="region of interest" description="Framework-4">
    <location>
        <begin position="98"/>
        <end position="108"/>
    </location>
</feature>
<feature type="disulfide bond" evidence="1">
    <location>
        <begin position="23"/>
        <end position="88"/>
    </location>
</feature>
<feature type="non-terminal residue">
    <location>
        <position position="108"/>
    </location>
</feature>
<protein>
    <recommendedName>
        <fullName>Ig kappa chain V-V region EPC 109</fullName>
    </recommendedName>
</protein>
<name>KV5AI_MOUSE</name>
<evidence type="ECO:0000255" key="1">
    <source>
        <dbReference type="PROSITE-ProRule" id="PRU00114"/>
    </source>
</evidence>
<dbReference type="PIR" id="B92808">
    <property type="entry name" value="KVMS09"/>
</dbReference>
<dbReference type="SMR" id="P01651"/>
<dbReference type="MGI" id="MGI:3642338">
    <property type="gene designation" value="ENSMUSG00000050218"/>
</dbReference>
<dbReference type="Proteomes" id="UP000000589">
    <property type="component" value="Unplaced"/>
</dbReference>
<dbReference type="GO" id="GO:0019814">
    <property type="term" value="C:immunoglobulin complex"/>
    <property type="evidence" value="ECO:0007669"/>
    <property type="project" value="UniProtKB-KW"/>
</dbReference>
<dbReference type="GO" id="GO:0002250">
    <property type="term" value="P:adaptive immune response"/>
    <property type="evidence" value="ECO:0007669"/>
    <property type="project" value="UniProtKB-KW"/>
</dbReference>
<dbReference type="CDD" id="cd04980">
    <property type="entry name" value="IgV_L_kappa"/>
    <property type="match status" value="1"/>
</dbReference>
<dbReference type="FunFam" id="2.60.40.10:FF:000212">
    <property type="entry name" value="Immunoglobulin kappa chain variable 12-38"/>
    <property type="match status" value="1"/>
</dbReference>
<dbReference type="Gene3D" id="2.60.40.10">
    <property type="entry name" value="Immunoglobulins"/>
    <property type="match status" value="1"/>
</dbReference>
<dbReference type="InterPro" id="IPR007110">
    <property type="entry name" value="Ig-like_dom"/>
</dbReference>
<dbReference type="InterPro" id="IPR036179">
    <property type="entry name" value="Ig-like_dom_sf"/>
</dbReference>
<dbReference type="InterPro" id="IPR013783">
    <property type="entry name" value="Ig-like_fold"/>
</dbReference>
<dbReference type="InterPro" id="IPR003599">
    <property type="entry name" value="Ig_sub"/>
</dbReference>
<dbReference type="InterPro" id="IPR013106">
    <property type="entry name" value="Ig_V-set"/>
</dbReference>
<dbReference type="InterPro" id="IPR050150">
    <property type="entry name" value="IgV_Light_Chain"/>
</dbReference>
<dbReference type="PANTHER" id="PTHR23267">
    <property type="entry name" value="IMMUNOGLOBULIN LIGHT CHAIN"/>
    <property type="match status" value="1"/>
</dbReference>
<dbReference type="Pfam" id="PF07686">
    <property type="entry name" value="V-set"/>
    <property type="match status" value="1"/>
</dbReference>
<dbReference type="SMART" id="SM00409">
    <property type="entry name" value="IG"/>
    <property type="match status" value="1"/>
</dbReference>
<dbReference type="SMART" id="SM00406">
    <property type="entry name" value="IGv"/>
    <property type="match status" value="1"/>
</dbReference>
<dbReference type="SUPFAM" id="SSF48726">
    <property type="entry name" value="Immunoglobulin"/>
    <property type="match status" value="1"/>
</dbReference>
<dbReference type="PROSITE" id="PS50835">
    <property type="entry name" value="IG_LIKE"/>
    <property type="match status" value="1"/>
</dbReference>
<keyword id="KW-1064">Adaptive immunity</keyword>
<keyword id="KW-0903">Direct protein sequencing</keyword>
<keyword id="KW-1015">Disulfide bond</keyword>
<keyword id="KW-0391">Immunity</keyword>
<keyword id="KW-1280">Immunoglobulin</keyword>
<keyword id="KW-1185">Reference proteome</keyword>
<proteinExistence type="evidence at protein level"/>
<comment type="miscellaneous">
    <text>This chain was isolated from myeloma proteins that bind beta(2-1)-fructofuranosyl moieties (inulin).</text>
</comment>
<organism>
    <name type="scientific">Mus musculus</name>
    <name type="common">Mouse</name>
    <dbReference type="NCBI Taxonomy" id="10090"/>
    <lineage>
        <taxon>Eukaryota</taxon>
        <taxon>Metazoa</taxon>
        <taxon>Chordata</taxon>
        <taxon>Craniata</taxon>
        <taxon>Vertebrata</taxon>
        <taxon>Euteleostomi</taxon>
        <taxon>Mammalia</taxon>
        <taxon>Eutheria</taxon>
        <taxon>Euarchontoglires</taxon>
        <taxon>Glires</taxon>
        <taxon>Rodentia</taxon>
        <taxon>Myomorpha</taxon>
        <taxon>Muroidea</taxon>
        <taxon>Muridae</taxon>
        <taxon>Murinae</taxon>
        <taxon>Mus</taxon>
        <taxon>Mus</taxon>
    </lineage>
</organism>
<reference key="1">
    <citation type="journal article" date="1979" name="J. Immunol.">
        <title>The structural basis of a hapten-inhibitable kappa-chain idiotype.</title>
        <authorList>
            <person name="Vrana M."/>
            <person name="Rudikoff S."/>
            <person name="Potter M."/>
        </authorList>
    </citation>
    <scope>PROTEIN SEQUENCE</scope>
</reference>
<sequence length="108" mass="11876">DVQMIQSPSSLSASLGDIVTMTCQASQGTNINLNWFQQKPGKAPKLLIYGASILEAGVPSRFSGRRYGTDFTLTISSLEDEDMATYFCLQHSYLPYTFGGGTKLEKKR</sequence>